<keyword id="KW-0030">Aminoacyl-tRNA synthetase</keyword>
<keyword id="KW-0067">ATP-binding</keyword>
<keyword id="KW-0963">Cytoplasm</keyword>
<keyword id="KW-0436">Ligase</keyword>
<keyword id="KW-0547">Nucleotide-binding</keyword>
<keyword id="KW-0648">Protein biosynthesis</keyword>
<reference key="1">
    <citation type="journal article" date="2005" name="Genome Res.">
        <title>Comparative and functional genomic analyses of the pathogenicity of phytopathogen Xanthomonas campestris pv. campestris.</title>
        <authorList>
            <person name="Qian W."/>
            <person name="Jia Y."/>
            <person name="Ren S.-X."/>
            <person name="He Y.-Q."/>
            <person name="Feng J.-X."/>
            <person name="Lu L.-F."/>
            <person name="Sun Q."/>
            <person name="Ying G."/>
            <person name="Tang D.-J."/>
            <person name="Tang H."/>
            <person name="Wu W."/>
            <person name="Hao P."/>
            <person name="Wang L."/>
            <person name="Jiang B.-L."/>
            <person name="Zeng S."/>
            <person name="Gu W.-Y."/>
            <person name="Lu G."/>
            <person name="Rong L."/>
            <person name="Tian Y."/>
            <person name="Yao Z."/>
            <person name="Fu G."/>
            <person name="Chen B."/>
            <person name="Fang R."/>
            <person name="Qiang B."/>
            <person name="Chen Z."/>
            <person name="Zhao G.-P."/>
            <person name="Tang J.-L."/>
            <person name="He C."/>
        </authorList>
    </citation>
    <scope>NUCLEOTIDE SEQUENCE [LARGE SCALE GENOMIC DNA]</scope>
    <source>
        <strain>8004</strain>
    </source>
</reference>
<dbReference type="EC" id="6.1.1.4" evidence="1"/>
<dbReference type="EMBL" id="CP000050">
    <property type="protein sequence ID" value="AAY48565.1"/>
    <property type="status" value="ALT_INIT"/>
    <property type="molecule type" value="Genomic_DNA"/>
</dbReference>
<dbReference type="RefSeq" id="WP_029628914.1">
    <property type="nucleotide sequence ID" value="NZ_CP155948.1"/>
</dbReference>
<dbReference type="SMR" id="Q4UWK8"/>
<dbReference type="KEGG" id="xcb:XC_1497"/>
<dbReference type="HOGENOM" id="CLU_004427_0_0_6"/>
<dbReference type="Proteomes" id="UP000000420">
    <property type="component" value="Chromosome"/>
</dbReference>
<dbReference type="GO" id="GO:0005829">
    <property type="term" value="C:cytosol"/>
    <property type="evidence" value="ECO:0007669"/>
    <property type="project" value="TreeGrafter"/>
</dbReference>
<dbReference type="GO" id="GO:0002161">
    <property type="term" value="F:aminoacyl-tRNA deacylase activity"/>
    <property type="evidence" value="ECO:0007669"/>
    <property type="project" value="InterPro"/>
</dbReference>
<dbReference type="GO" id="GO:0005524">
    <property type="term" value="F:ATP binding"/>
    <property type="evidence" value="ECO:0007669"/>
    <property type="project" value="UniProtKB-UniRule"/>
</dbReference>
<dbReference type="GO" id="GO:0004823">
    <property type="term" value="F:leucine-tRNA ligase activity"/>
    <property type="evidence" value="ECO:0007669"/>
    <property type="project" value="UniProtKB-UniRule"/>
</dbReference>
<dbReference type="GO" id="GO:0006429">
    <property type="term" value="P:leucyl-tRNA aminoacylation"/>
    <property type="evidence" value="ECO:0007669"/>
    <property type="project" value="UniProtKB-UniRule"/>
</dbReference>
<dbReference type="CDD" id="cd07958">
    <property type="entry name" value="Anticodon_Ia_Leu_BEm"/>
    <property type="match status" value="1"/>
</dbReference>
<dbReference type="CDD" id="cd00812">
    <property type="entry name" value="LeuRS_core"/>
    <property type="match status" value="1"/>
</dbReference>
<dbReference type="FunFam" id="1.10.730.10:FF:000003">
    <property type="entry name" value="Leucine--tRNA ligase"/>
    <property type="match status" value="1"/>
</dbReference>
<dbReference type="FunFam" id="2.20.28.290:FF:000001">
    <property type="entry name" value="Leucine--tRNA ligase"/>
    <property type="match status" value="1"/>
</dbReference>
<dbReference type="FunFam" id="3.10.20.590:FF:000001">
    <property type="entry name" value="Leucine--tRNA ligase"/>
    <property type="match status" value="1"/>
</dbReference>
<dbReference type="FunFam" id="3.40.50.620:FF:000003">
    <property type="entry name" value="Leucine--tRNA ligase"/>
    <property type="match status" value="1"/>
</dbReference>
<dbReference type="FunFam" id="3.40.50.620:FF:000124">
    <property type="entry name" value="Leucine--tRNA ligase"/>
    <property type="match status" value="1"/>
</dbReference>
<dbReference type="FunFam" id="3.90.740.10:FF:000012">
    <property type="entry name" value="Leucine--tRNA ligase"/>
    <property type="match status" value="1"/>
</dbReference>
<dbReference type="Gene3D" id="2.20.28.290">
    <property type="match status" value="1"/>
</dbReference>
<dbReference type="Gene3D" id="3.10.20.590">
    <property type="match status" value="1"/>
</dbReference>
<dbReference type="Gene3D" id="3.40.50.620">
    <property type="entry name" value="HUPs"/>
    <property type="match status" value="2"/>
</dbReference>
<dbReference type="Gene3D" id="1.10.730.10">
    <property type="entry name" value="Isoleucyl-tRNA Synthetase, Domain 1"/>
    <property type="match status" value="2"/>
</dbReference>
<dbReference type="Gene3D" id="3.90.740.10">
    <property type="entry name" value="Valyl/Leucyl/Isoleucyl-tRNA synthetase, editing domain"/>
    <property type="match status" value="1"/>
</dbReference>
<dbReference type="HAMAP" id="MF_00049_B">
    <property type="entry name" value="Leu_tRNA_synth_B"/>
    <property type="match status" value="1"/>
</dbReference>
<dbReference type="InterPro" id="IPR001412">
    <property type="entry name" value="aa-tRNA-synth_I_CS"/>
</dbReference>
<dbReference type="InterPro" id="IPR002300">
    <property type="entry name" value="aa-tRNA-synth_Ia"/>
</dbReference>
<dbReference type="InterPro" id="IPR002302">
    <property type="entry name" value="Leu-tRNA-ligase"/>
</dbReference>
<dbReference type="InterPro" id="IPR025709">
    <property type="entry name" value="Leu_tRNA-synth_edit"/>
</dbReference>
<dbReference type="InterPro" id="IPR013155">
    <property type="entry name" value="M/V/L/I-tRNA-synth_anticd-bd"/>
</dbReference>
<dbReference type="InterPro" id="IPR015413">
    <property type="entry name" value="Methionyl/Leucyl_tRNA_Synth"/>
</dbReference>
<dbReference type="InterPro" id="IPR014729">
    <property type="entry name" value="Rossmann-like_a/b/a_fold"/>
</dbReference>
<dbReference type="InterPro" id="IPR009080">
    <property type="entry name" value="tRNAsynth_Ia_anticodon-bd"/>
</dbReference>
<dbReference type="InterPro" id="IPR009008">
    <property type="entry name" value="Val/Leu/Ile-tRNA-synth_edit"/>
</dbReference>
<dbReference type="NCBIfam" id="TIGR00396">
    <property type="entry name" value="leuS_bact"/>
    <property type="match status" value="1"/>
</dbReference>
<dbReference type="PANTHER" id="PTHR43740:SF2">
    <property type="entry name" value="LEUCINE--TRNA LIGASE, MITOCHONDRIAL"/>
    <property type="match status" value="1"/>
</dbReference>
<dbReference type="PANTHER" id="PTHR43740">
    <property type="entry name" value="LEUCYL-TRNA SYNTHETASE"/>
    <property type="match status" value="1"/>
</dbReference>
<dbReference type="Pfam" id="PF08264">
    <property type="entry name" value="Anticodon_1"/>
    <property type="match status" value="1"/>
</dbReference>
<dbReference type="Pfam" id="PF00133">
    <property type="entry name" value="tRNA-synt_1"/>
    <property type="match status" value="2"/>
</dbReference>
<dbReference type="Pfam" id="PF13603">
    <property type="entry name" value="tRNA-synt_1_2"/>
    <property type="match status" value="1"/>
</dbReference>
<dbReference type="Pfam" id="PF09334">
    <property type="entry name" value="tRNA-synt_1g"/>
    <property type="match status" value="1"/>
</dbReference>
<dbReference type="PRINTS" id="PR00985">
    <property type="entry name" value="TRNASYNTHLEU"/>
</dbReference>
<dbReference type="SUPFAM" id="SSF47323">
    <property type="entry name" value="Anticodon-binding domain of a subclass of class I aminoacyl-tRNA synthetases"/>
    <property type="match status" value="1"/>
</dbReference>
<dbReference type="SUPFAM" id="SSF52374">
    <property type="entry name" value="Nucleotidylyl transferase"/>
    <property type="match status" value="1"/>
</dbReference>
<dbReference type="SUPFAM" id="SSF50677">
    <property type="entry name" value="ValRS/IleRS/LeuRS editing domain"/>
    <property type="match status" value="1"/>
</dbReference>
<dbReference type="PROSITE" id="PS00178">
    <property type="entry name" value="AA_TRNA_LIGASE_I"/>
    <property type="match status" value="1"/>
</dbReference>
<evidence type="ECO:0000255" key="1">
    <source>
        <dbReference type="HAMAP-Rule" id="MF_00049"/>
    </source>
</evidence>
<evidence type="ECO:0000305" key="2"/>
<proteinExistence type="inferred from homology"/>
<sequence length="879" mass="98416">MSTVEPNAYDPQQVETSAQQFWDATRAFQVDENSDKPKFYCLSMLPYPSGALHMGHVRNYTISDVVSRYKRMTGHNVLQPMGWDAFGLPAENAAIKNKTAPAKWTYANIEHMRAQLKSLGYAIDWSREFATCTPDYYVHEQRMFTRLMRKGLAYRRNAVVNWDPIDQTVLANEQVIDGRGWRSGALVEKREIPQWFLRITDYAQELLDGLDQLDGWPDSVKTMQRNWIGRSEGLEIQFDVRDTTGAALDPLRVFTTRPDTLMGVTFVSIAAEHPLAQHAAKSNPELASMLETLKHGGVSEAELETQEKRGMATGLTAVHPISGEEVPVWVANFVLMGYGTGAVMAVPGHDQRDFEFANKYGLPIVQVVKLREPRNDDEQAWDATQWRDWYTDKSRELELINSAEFDGLDYHGAFEALAERFERKGQGQRRINYRLRDWGVSRQRYWGCPIPVIYCAKCGAVPVPEDQLPVVLPENVEFAGTGSPIKTDPTWRQTTCPECGGPAERETDTFDTFMESSWYVARYTSPNARDMVDRRANYWMPADLYVGGIEHAILHLMYFRFYHKLMRDARLVDSDEPVTNLLTQGMVIAETFYRDADNGGKDWINPADVEIQRDERGRVVGASLIADGQPVHIGGTEKMSKSKNNGVDPQAMVAKYGADTVRLFSMFAAPPEQSLEWNEAGVDGMARFMRRLWVQVHKHVGEGAAALDVASLSAEQKAIRRKTHETIGKVDDDYGRRHSFNTAIAAVMELSNALAKFDDASAQGRAVRQEALEAMVLLLNPITPHASHALWQVLGRGETLLENVPFPQVDAAALVRDALTLAIQVNGKLRGTIEVAADAAREQIEALALAEPNAAKFLDGLSVRKIIIVPGKIVNIVAG</sequence>
<gene>
    <name evidence="1" type="primary">leuS</name>
    <name type="ordered locus">XC_1497</name>
</gene>
<feature type="chain" id="PRO_0000334837" description="Leucine--tRNA ligase">
    <location>
        <begin position="1"/>
        <end position="879"/>
    </location>
</feature>
<feature type="short sequence motif" description="'HIGH' region">
    <location>
        <begin position="46"/>
        <end position="56"/>
    </location>
</feature>
<feature type="short sequence motif" description="'KMSKS' region">
    <location>
        <begin position="638"/>
        <end position="642"/>
    </location>
</feature>
<feature type="binding site" evidence="1">
    <location>
        <position position="641"/>
    </location>
    <ligand>
        <name>ATP</name>
        <dbReference type="ChEBI" id="CHEBI:30616"/>
    </ligand>
</feature>
<comment type="catalytic activity">
    <reaction evidence="1">
        <text>tRNA(Leu) + L-leucine + ATP = L-leucyl-tRNA(Leu) + AMP + diphosphate</text>
        <dbReference type="Rhea" id="RHEA:11688"/>
        <dbReference type="Rhea" id="RHEA-COMP:9613"/>
        <dbReference type="Rhea" id="RHEA-COMP:9622"/>
        <dbReference type="ChEBI" id="CHEBI:30616"/>
        <dbReference type="ChEBI" id="CHEBI:33019"/>
        <dbReference type="ChEBI" id="CHEBI:57427"/>
        <dbReference type="ChEBI" id="CHEBI:78442"/>
        <dbReference type="ChEBI" id="CHEBI:78494"/>
        <dbReference type="ChEBI" id="CHEBI:456215"/>
        <dbReference type="EC" id="6.1.1.4"/>
    </reaction>
</comment>
<comment type="subcellular location">
    <subcellularLocation>
        <location evidence="1">Cytoplasm</location>
    </subcellularLocation>
</comment>
<comment type="similarity">
    <text evidence="1">Belongs to the class-I aminoacyl-tRNA synthetase family.</text>
</comment>
<comment type="sequence caution" evidence="2">
    <conflict type="erroneous initiation">
        <sequence resource="EMBL-CDS" id="AAY48565"/>
    </conflict>
</comment>
<organism>
    <name type="scientific">Xanthomonas campestris pv. campestris (strain 8004)</name>
    <dbReference type="NCBI Taxonomy" id="314565"/>
    <lineage>
        <taxon>Bacteria</taxon>
        <taxon>Pseudomonadati</taxon>
        <taxon>Pseudomonadota</taxon>
        <taxon>Gammaproteobacteria</taxon>
        <taxon>Lysobacterales</taxon>
        <taxon>Lysobacteraceae</taxon>
        <taxon>Xanthomonas</taxon>
    </lineage>
</organism>
<name>SYL_XANC8</name>
<protein>
    <recommendedName>
        <fullName evidence="1">Leucine--tRNA ligase</fullName>
        <ecNumber evidence="1">6.1.1.4</ecNumber>
    </recommendedName>
    <alternativeName>
        <fullName evidence="1">Leucyl-tRNA synthetase</fullName>
        <shortName evidence="1">LeuRS</shortName>
    </alternativeName>
</protein>
<accession>Q4UWK8</accession>